<feature type="initiator methionine" description="Removed" evidence="1">
    <location>
        <position position="1"/>
    </location>
</feature>
<feature type="chain" id="PRO_0000143843" description="Uridylate kinase">
    <location>
        <begin position="2"/>
        <end position="241"/>
    </location>
</feature>
<feature type="region of interest" description="Involved in allosteric activation by GTP" evidence="2">
    <location>
        <begin position="23"/>
        <end position="28"/>
    </location>
</feature>
<feature type="binding site" evidence="2">
    <location>
        <begin position="15"/>
        <end position="18"/>
    </location>
    <ligand>
        <name>ATP</name>
        <dbReference type="ChEBI" id="CHEBI:30616"/>
    </ligand>
</feature>
<feature type="binding site" evidence="2">
    <location>
        <position position="57"/>
    </location>
    <ligand>
        <name>UMP</name>
        <dbReference type="ChEBI" id="CHEBI:57865"/>
    </ligand>
</feature>
<feature type="binding site" evidence="2">
    <location>
        <position position="58"/>
    </location>
    <ligand>
        <name>ATP</name>
        <dbReference type="ChEBI" id="CHEBI:30616"/>
    </ligand>
</feature>
<feature type="binding site" evidence="2">
    <location>
        <position position="62"/>
    </location>
    <ligand>
        <name>ATP</name>
        <dbReference type="ChEBI" id="CHEBI:30616"/>
    </ligand>
</feature>
<feature type="binding site" evidence="2">
    <location>
        <position position="77"/>
    </location>
    <ligand>
        <name>UMP</name>
        <dbReference type="ChEBI" id="CHEBI:57865"/>
    </ligand>
</feature>
<feature type="binding site" evidence="2">
    <location>
        <begin position="138"/>
        <end position="145"/>
    </location>
    <ligand>
        <name>UMP</name>
        <dbReference type="ChEBI" id="CHEBI:57865"/>
    </ligand>
</feature>
<feature type="binding site" evidence="2">
    <location>
        <position position="165"/>
    </location>
    <ligand>
        <name>ATP</name>
        <dbReference type="ChEBI" id="CHEBI:30616"/>
    </ligand>
</feature>
<feature type="binding site" evidence="2">
    <location>
        <position position="171"/>
    </location>
    <ligand>
        <name>ATP</name>
        <dbReference type="ChEBI" id="CHEBI:30616"/>
    </ligand>
</feature>
<feature type="binding site" evidence="2">
    <location>
        <position position="174"/>
    </location>
    <ligand>
        <name>ATP</name>
        <dbReference type="ChEBI" id="CHEBI:30616"/>
    </ligand>
</feature>
<sequence>MATNAKPVYKRILLKLSGEALQGTEGFGIDASILDRMAQEIKELVELGIQVGVVIGGGNLFRGAGLAKAGMNRVVGDHMGMLATVMNGLAMRDALHRAYVNARLMSAIPLNGVCDSYSWAEAISLLRNNRVVILSAGTGNPFFTTDSAACLRGIEIEADVVLKATKVDGVFTADPAKDPTATMYEQLTYSEVLEKELKVMDLAAFTLARDHKLPIRVFNMNKPGALRRVVMGEKEGTLITE</sequence>
<comment type="function">
    <text evidence="2">Catalyzes the reversible phosphorylation of UMP to UDP.</text>
</comment>
<comment type="catalytic activity">
    <reaction evidence="2">
        <text>UMP + ATP = UDP + ADP</text>
        <dbReference type="Rhea" id="RHEA:24400"/>
        <dbReference type="ChEBI" id="CHEBI:30616"/>
        <dbReference type="ChEBI" id="CHEBI:57865"/>
        <dbReference type="ChEBI" id="CHEBI:58223"/>
        <dbReference type="ChEBI" id="CHEBI:456216"/>
        <dbReference type="EC" id="2.7.4.22"/>
    </reaction>
</comment>
<comment type="activity regulation">
    <text evidence="2">Allosterically activated by GTP. Inhibited by UTP.</text>
</comment>
<comment type="pathway">
    <text evidence="2">Pyrimidine metabolism; CTP biosynthesis via de novo pathway; UDP from UMP (UMPK route): step 1/1.</text>
</comment>
<comment type="subunit">
    <text evidence="2">Homohexamer.</text>
</comment>
<comment type="subcellular location">
    <subcellularLocation>
        <location evidence="2">Cytoplasm</location>
    </subcellularLocation>
</comment>
<comment type="similarity">
    <text evidence="2">Belongs to the UMP kinase family.</text>
</comment>
<dbReference type="EC" id="2.7.4.22" evidence="2"/>
<dbReference type="EMBL" id="AE005174">
    <property type="protein sequence ID" value="AAG54473.1"/>
    <property type="molecule type" value="Genomic_DNA"/>
</dbReference>
<dbReference type="EMBL" id="BA000007">
    <property type="protein sequence ID" value="BAB33596.1"/>
    <property type="molecule type" value="Genomic_DNA"/>
</dbReference>
<dbReference type="PIR" id="E85501">
    <property type="entry name" value="E85501"/>
</dbReference>
<dbReference type="PIR" id="E90650">
    <property type="entry name" value="E90650"/>
</dbReference>
<dbReference type="RefSeq" id="NP_308200.1">
    <property type="nucleotide sequence ID" value="NC_002695.1"/>
</dbReference>
<dbReference type="RefSeq" id="WP_000224573.1">
    <property type="nucleotide sequence ID" value="NZ_VOAI01000002.1"/>
</dbReference>
<dbReference type="SMR" id="P0A7F1"/>
<dbReference type="STRING" id="155864.Z0182"/>
<dbReference type="GeneID" id="913857"/>
<dbReference type="GeneID" id="93777254"/>
<dbReference type="KEGG" id="ece:Z0182"/>
<dbReference type="KEGG" id="ecs:ECs_0173"/>
<dbReference type="PATRIC" id="fig|386585.9.peg.275"/>
<dbReference type="eggNOG" id="COG0528">
    <property type="taxonomic scope" value="Bacteria"/>
</dbReference>
<dbReference type="HOGENOM" id="CLU_033861_0_0_6"/>
<dbReference type="OMA" id="LMGDKQF"/>
<dbReference type="UniPathway" id="UPA00159">
    <property type="reaction ID" value="UER00275"/>
</dbReference>
<dbReference type="Proteomes" id="UP000000558">
    <property type="component" value="Chromosome"/>
</dbReference>
<dbReference type="Proteomes" id="UP000002519">
    <property type="component" value="Chromosome"/>
</dbReference>
<dbReference type="GO" id="GO:0005829">
    <property type="term" value="C:cytosol"/>
    <property type="evidence" value="ECO:0007669"/>
    <property type="project" value="TreeGrafter"/>
</dbReference>
<dbReference type="GO" id="GO:0005524">
    <property type="term" value="F:ATP binding"/>
    <property type="evidence" value="ECO:0007669"/>
    <property type="project" value="UniProtKB-KW"/>
</dbReference>
<dbReference type="GO" id="GO:0033862">
    <property type="term" value="F:UMP kinase activity"/>
    <property type="evidence" value="ECO:0007669"/>
    <property type="project" value="UniProtKB-EC"/>
</dbReference>
<dbReference type="GO" id="GO:0044210">
    <property type="term" value="P:'de novo' CTP biosynthetic process"/>
    <property type="evidence" value="ECO:0007669"/>
    <property type="project" value="UniProtKB-UniRule"/>
</dbReference>
<dbReference type="GO" id="GO:0006225">
    <property type="term" value="P:UDP biosynthetic process"/>
    <property type="evidence" value="ECO:0007669"/>
    <property type="project" value="TreeGrafter"/>
</dbReference>
<dbReference type="CDD" id="cd04254">
    <property type="entry name" value="AAK_UMPK-PyrH-Ec"/>
    <property type="match status" value="1"/>
</dbReference>
<dbReference type="FunFam" id="3.40.1160.10:FF:000001">
    <property type="entry name" value="Uridylate kinase"/>
    <property type="match status" value="1"/>
</dbReference>
<dbReference type="Gene3D" id="3.40.1160.10">
    <property type="entry name" value="Acetylglutamate kinase-like"/>
    <property type="match status" value="1"/>
</dbReference>
<dbReference type="HAMAP" id="MF_01220_B">
    <property type="entry name" value="PyrH_B"/>
    <property type="match status" value="1"/>
</dbReference>
<dbReference type="InterPro" id="IPR036393">
    <property type="entry name" value="AceGlu_kinase-like_sf"/>
</dbReference>
<dbReference type="InterPro" id="IPR001048">
    <property type="entry name" value="Asp/Glu/Uridylate_kinase"/>
</dbReference>
<dbReference type="InterPro" id="IPR011817">
    <property type="entry name" value="Uridylate_kinase"/>
</dbReference>
<dbReference type="InterPro" id="IPR015963">
    <property type="entry name" value="Uridylate_kinase_bac"/>
</dbReference>
<dbReference type="NCBIfam" id="TIGR02075">
    <property type="entry name" value="pyrH_bact"/>
    <property type="match status" value="1"/>
</dbReference>
<dbReference type="PANTHER" id="PTHR42833">
    <property type="entry name" value="URIDYLATE KINASE"/>
    <property type="match status" value="1"/>
</dbReference>
<dbReference type="PANTHER" id="PTHR42833:SF4">
    <property type="entry name" value="URIDYLATE KINASE PUMPKIN, CHLOROPLASTIC"/>
    <property type="match status" value="1"/>
</dbReference>
<dbReference type="Pfam" id="PF00696">
    <property type="entry name" value="AA_kinase"/>
    <property type="match status" value="1"/>
</dbReference>
<dbReference type="PIRSF" id="PIRSF005650">
    <property type="entry name" value="Uridylate_kin"/>
    <property type="match status" value="1"/>
</dbReference>
<dbReference type="SUPFAM" id="SSF53633">
    <property type="entry name" value="Carbamate kinase-like"/>
    <property type="match status" value="1"/>
</dbReference>
<proteinExistence type="inferred from homology"/>
<organism>
    <name type="scientific">Escherichia coli O157:H7</name>
    <dbReference type="NCBI Taxonomy" id="83334"/>
    <lineage>
        <taxon>Bacteria</taxon>
        <taxon>Pseudomonadati</taxon>
        <taxon>Pseudomonadota</taxon>
        <taxon>Gammaproteobacteria</taxon>
        <taxon>Enterobacterales</taxon>
        <taxon>Enterobacteriaceae</taxon>
        <taxon>Escherichia</taxon>
    </lineage>
</organism>
<reference key="1">
    <citation type="journal article" date="2001" name="Nature">
        <title>Genome sequence of enterohaemorrhagic Escherichia coli O157:H7.</title>
        <authorList>
            <person name="Perna N.T."/>
            <person name="Plunkett G. III"/>
            <person name="Burland V."/>
            <person name="Mau B."/>
            <person name="Glasner J.D."/>
            <person name="Rose D.J."/>
            <person name="Mayhew G.F."/>
            <person name="Evans P.S."/>
            <person name="Gregor J."/>
            <person name="Kirkpatrick H.A."/>
            <person name="Posfai G."/>
            <person name="Hackett J."/>
            <person name="Klink S."/>
            <person name="Boutin A."/>
            <person name="Shao Y."/>
            <person name="Miller L."/>
            <person name="Grotbeck E.J."/>
            <person name="Davis N.W."/>
            <person name="Lim A."/>
            <person name="Dimalanta E.T."/>
            <person name="Potamousis K."/>
            <person name="Apodaca J."/>
            <person name="Anantharaman T.S."/>
            <person name="Lin J."/>
            <person name="Yen G."/>
            <person name="Schwartz D.C."/>
            <person name="Welch R.A."/>
            <person name="Blattner F.R."/>
        </authorList>
    </citation>
    <scope>NUCLEOTIDE SEQUENCE [LARGE SCALE GENOMIC DNA]</scope>
    <source>
        <strain>O157:H7 / EDL933 / ATCC 700927 / EHEC</strain>
    </source>
</reference>
<reference key="2">
    <citation type="journal article" date="2001" name="DNA Res.">
        <title>Complete genome sequence of enterohemorrhagic Escherichia coli O157:H7 and genomic comparison with a laboratory strain K-12.</title>
        <authorList>
            <person name="Hayashi T."/>
            <person name="Makino K."/>
            <person name="Ohnishi M."/>
            <person name="Kurokawa K."/>
            <person name="Ishii K."/>
            <person name="Yokoyama K."/>
            <person name="Han C.-G."/>
            <person name="Ohtsubo E."/>
            <person name="Nakayama K."/>
            <person name="Murata T."/>
            <person name="Tanaka M."/>
            <person name="Tobe T."/>
            <person name="Iida T."/>
            <person name="Takami H."/>
            <person name="Honda T."/>
            <person name="Sasakawa C."/>
            <person name="Ogasawara N."/>
            <person name="Yasunaga T."/>
            <person name="Kuhara S."/>
            <person name="Shiba T."/>
            <person name="Hattori M."/>
            <person name="Shinagawa H."/>
        </authorList>
    </citation>
    <scope>NUCLEOTIDE SEQUENCE [LARGE SCALE GENOMIC DNA]</scope>
    <source>
        <strain>O157:H7 / Sakai / RIMD 0509952 / EHEC</strain>
    </source>
</reference>
<name>PYRH_ECO57</name>
<protein>
    <recommendedName>
        <fullName evidence="2">Uridylate kinase</fullName>
        <shortName evidence="2">UK</shortName>
        <ecNumber evidence="2">2.7.4.22</ecNumber>
    </recommendedName>
    <alternativeName>
        <fullName evidence="2">Uridine monophosphate kinase</fullName>
        <shortName evidence="2">UMP kinase</shortName>
        <shortName evidence="2">UMPK</shortName>
    </alternativeName>
</protein>
<keyword id="KW-0021">Allosteric enzyme</keyword>
<keyword id="KW-0067">ATP-binding</keyword>
<keyword id="KW-0963">Cytoplasm</keyword>
<keyword id="KW-0418">Kinase</keyword>
<keyword id="KW-0547">Nucleotide-binding</keyword>
<keyword id="KW-0665">Pyrimidine biosynthesis</keyword>
<keyword id="KW-1185">Reference proteome</keyword>
<keyword id="KW-0808">Transferase</keyword>
<evidence type="ECO:0000250" key="1"/>
<evidence type="ECO:0000255" key="2">
    <source>
        <dbReference type="HAMAP-Rule" id="MF_01220"/>
    </source>
</evidence>
<accession>P0A7F1</accession>
<accession>P29464</accession>
<gene>
    <name evidence="2" type="primary">pyrH</name>
    <name type="ordered locus">Z0182</name>
    <name type="ordered locus">ECs0173</name>
</gene>